<protein>
    <recommendedName>
        <fullName evidence="1">Elongation factor 1-beta</fullName>
        <shortName evidence="1">EF-1-beta</shortName>
    </recommendedName>
    <alternativeName>
        <fullName evidence="1">aEF-1beta</fullName>
    </alternativeName>
</protein>
<feature type="chain" id="PRO_1000006621" description="Elongation factor 1-beta">
    <location>
        <begin position="1"/>
        <end position="92"/>
    </location>
</feature>
<comment type="function">
    <text evidence="1">Promotes the exchange of GDP for GTP in EF-1-alpha/GDP, thus allowing the regeneration of EF-1-alpha/GTP that could then be used to form the ternary complex EF-1-alpha/GTP/AAtRNA.</text>
</comment>
<comment type="similarity">
    <text evidence="1">Belongs to the EF-1-beta/EF-1-delta family.</text>
</comment>
<sequence length="92" mass="10567">MSAEVALVYRVLPESVEVDVEKLKEAIVNRLAPKYKVDKVEVEEIGFGIKALRFYIRMPESDEYSSDEVEEILRSVEGVGGFELEYFSRLSF</sequence>
<organism>
    <name type="scientific">Pyrobaculum calidifontis (strain DSM 21063 / JCM 11548 / VA1)</name>
    <dbReference type="NCBI Taxonomy" id="410359"/>
    <lineage>
        <taxon>Archaea</taxon>
        <taxon>Thermoproteota</taxon>
        <taxon>Thermoprotei</taxon>
        <taxon>Thermoproteales</taxon>
        <taxon>Thermoproteaceae</taxon>
        <taxon>Pyrobaculum</taxon>
    </lineage>
</organism>
<accession>A3MY12</accession>
<gene>
    <name evidence="1" type="primary">ef1b</name>
    <name type="ordered locus">Pcal_2114</name>
</gene>
<keyword id="KW-0251">Elongation factor</keyword>
<keyword id="KW-0648">Protein biosynthesis</keyword>
<evidence type="ECO:0000255" key="1">
    <source>
        <dbReference type="HAMAP-Rule" id="MF_00043"/>
    </source>
</evidence>
<reference key="1">
    <citation type="submission" date="2007-02" db="EMBL/GenBank/DDBJ databases">
        <title>Complete sequence of Pyrobaculum calidifontis JCM 11548.</title>
        <authorList>
            <consortium name="US DOE Joint Genome Institute"/>
            <person name="Copeland A."/>
            <person name="Lucas S."/>
            <person name="Lapidus A."/>
            <person name="Barry K."/>
            <person name="Glavina del Rio T."/>
            <person name="Dalin E."/>
            <person name="Tice H."/>
            <person name="Pitluck S."/>
            <person name="Chain P."/>
            <person name="Malfatti S."/>
            <person name="Shin M."/>
            <person name="Vergez L."/>
            <person name="Schmutz J."/>
            <person name="Larimer F."/>
            <person name="Land M."/>
            <person name="Hauser L."/>
            <person name="Kyrpides N."/>
            <person name="Mikhailova N."/>
            <person name="Cozen A.E."/>
            <person name="Fitz-Gibbon S.T."/>
            <person name="House C.H."/>
            <person name="Saltikov C."/>
            <person name="Lowe T.M."/>
            <person name="Richardson P."/>
        </authorList>
    </citation>
    <scope>NUCLEOTIDE SEQUENCE [LARGE SCALE GENOMIC DNA]</scope>
    <source>
        <strain>DSM 21063 / JCM 11548 / VA1</strain>
    </source>
</reference>
<name>EF1B_PYRCJ</name>
<proteinExistence type="inferred from homology"/>
<dbReference type="EMBL" id="CP000561">
    <property type="protein sequence ID" value="ABO09529.1"/>
    <property type="molecule type" value="Genomic_DNA"/>
</dbReference>
<dbReference type="RefSeq" id="WP_011850787.1">
    <property type="nucleotide sequence ID" value="NC_009073.1"/>
</dbReference>
<dbReference type="SMR" id="A3MY12"/>
<dbReference type="STRING" id="410359.Pcal_2114"/>
<dbReference type="GeneID" id="4908618"/>
<dbReference type="KEGG" id="pcl:Pcal_2114"/>
<dbReference type="eggNOG" id="arCOG01988">
    <property type="taxonomic scope" value="Archaea"/>
</dbReference>
<dbReference type="HOGENOM" id="CLU_165896_1_0_2"/>
<dbReference type="OrthoDB" id="84643at2157"/>
<dbReference type="Proteomes" id="UP000001431">
    <property type="component" value="Chromosome"/>
</dbReference>
<dbReference type="GO" id="GO:0003746">
    <property type="term" value="F:translation elongation factor activity"/>
    <property type="evidence" value="ECO:0007669"/>
    <property type="project" value="UniProtKB-UniRule"/>
</dbReference>
<dbReference type="CDD" id="cd00292">
    <property type="entry name" value="EF1B"/>
    <property type="match status" value="1"/>
</dbReference>
<dbReference type="Gene3D" id="3.30.70.60">
    <property type="match status" value="1"/>
</dbReference>
<dbReference type="HAMAP" id="MF_00043">
    <property type="entry name" value="EF1_beta"/>
    <property type="match status" value="1"/>
</dbReference>
<dbReference type="InterPro" id="IPR036219">
    <property type="entry name" value="eEF-1beta-like_sf"/>
</dbReference>
<dbReference type="InterPro" id="IPR014038">
    <property type="entry name" value="EF1B_bsu/dsu_GNE"/>
</dbReference>
<dbReference type="InterPro" id="IPR014717">
    <property type="entry name" value="Transl_elong_EF1B/ribsomal_bS6"/>
</dbReference>
<dbReference type="InterPro" id="IPR004542">
    <property type="entry name" value="Transl_elong_EF1B_B_arc"/>
</dbReference>
<dbReference type="NCBIfam" id="NF001670">
    <property type="entry name" value="PRK00435.1"/>
    <property type="match status" value="1"/>
</dbReference>
<dbReference type="PANTHER" id="PTHR39647">
    <property type="entry name" value="ELONGATION FACTOR 1-BETA"/>
    <property type="match status" value="1"/>
</dbReference>
<dbReference type="PANTHER" id="PTHR39647:SF1">
    <property type="entry name" value="ELONGATION FACTOR 1-BETA"/>
    <property type="match status" value="1"/>
</dbReference>
<dbReference type="Pfam" id="PF00736">
    <property type="entry name" value="EF1_GNE"/>
    <property type="match status" value="1"/>
</dbReference>
<dbReference type="PIRSF" id="PIRSF006521">
    <property type="entry name" value="Transl_elong_EF1B_B_arc"/>
    <property type="match status" value="1"/>
</dbReference>
<dbReference type="SMART" id="SM00888">
    <property type="entry name" value="EF1_GNE"/>
    <property type="match status" value="1"/>
</dbReference>
<dbReference type="SUPFAM" id="SSF54984">
    <property type="entry name" value="eEF-1beta-like"/>
    <property type="match status" value="1"/>
</dbReference>